<reference key="1">
    <citation type="journal article" date="1996" name="Gene">
        <title>Analysis of DNA flanking the treA gene of Bacillus subtilis reveals genes encoding a putative specific enzyme IITre and a potential regulator of the trehalose operon.</title>
        <authorList>
            <person name="Schoeck F."/>
            <person name="Dahl M.K."/>
        </authorList>
    </citation>
    <scope>NUCLEOTIDE SEQUENCE [GENOMIC DNA]</scope>
    <source>
        <strain>168 / Marburg / ATCC 6051 / DSM 10 / JCM 1465 / NBRC 13719 / NCIMB 3610 / NRRL NRS-744 / VKM B-501</strain>
    </source>
</reference>
<reference key="2">
    <citation type="journal article" date="1996" name="Microbiology">
        <title>Cloning and sequencing of a 40.6 kb segment in the 73 degrees-76 degrees region of the Bacillus subtilis chromosome containing genes for trehalose metabolism and acetoin utilization.</title>
        <authorList>
            <person name="Yamamoto H."/>
            <person name="Uchiyama S."/>
            <person name="Sekiguchi J."/>
        </authorList>
    </citation>
    <scope>NUCLEOTIDE SEQUENCE [GENOMIC DNA]</scope>
    <source>
        <strain>168 / AC327</strain>
    </source>
</reference>
<reference key="3">
    <citation type="journal article" date="1997" name="Nature">
        <title>The complete genome sequence of the Gram-positive bacterium Bacillus subtilis.</title>
        <authorList>
            <person name="Kunst F."/>
            <person name="Ogasawara N."/>
            <person name="Moszer I."/>
            <person name="Albertini A.M."/>
            <person name="Alloni G."/>
            <person name="Azevedo V."/>
            <person name="Bertero M.G."/>
            <person name="Bessieres P."/>
            <person name="Bolotin A."/>
            <person name="Borchert S."/>
            <person name="Borriss R."/>
            <person name="Boursier L."/>
            <person name="Brans A."/>
            <person name="Braun M."/>
            <person name="Brignell S.C."/>
            <person name="Bron S."/>
            <person name="Brouillet S."/>
            <person name="Bruschi C.V."/>
            <person name="Caldwell B."/>
            <person name="Capuano V."/>
            <person name="Carter N.M."/>
            <person name="Choi S.-K."/>
            <person name="Codani J.-J."/>
            <person name="Connerton I.F."/>
            <person name="Cummings N.J."/>
            <person name="Daniel R.A."/>
            <person name="Denizot F."/>
            <person name="Devine K.M."/>
            <person name="Duesterhoeft A."/>
            <person name="Ehrlich S.D."/>
            <person name="Emmerson P.T."/>
            <person name="Entian K.-D."/>
            <person name="Errington J."/>
            <person name="Fabret C."/>
            <person name="Ferrari E."/>
            <person name="Foulger D."/>
            <person name="Fritz C."/>
            <person name="Fujita M."/>
            <person name="Fujita Y."/>
            <person name="Fuma S."/>
            <person name="Galizzi A."/>
            <person name="Galleron N."/>
            <person name="Ghim S.-Y."/>
            <person name="Glaser P."/>
            <person name="Goffeau A."/>
            <person name="Golightly E.J."/>
            <person name="Grandi G."/>
            <person name="Guiseppi G."/>
            <person name="Guy B.J."/>
            <person name="Haga K."/>
            <person name="Haiech J."/>
            <person name="Harwood C.R."/>
            <person name="Henaut A."/>
            <person name="Hilbert H."/>
            <person name="Holsappel S."/>
            <person name="Hosono S."/>
            <person name="Hullo M.-F."/>
            <person name="Itaya M."/>
            <person name="Jones L.-M."/>
            <person name="Joris B."/>
            <person name="Karamata D."/>
            <person name="Kasahara Y."/>
            <person name="Klaerr-Blanchard M."/>
            <person name="Klein C."/>
            <person name="Kobayashi Y."/>
            <person name="Koetter P."/>
            <person name="Koningstein G."/>
            <person name="Krogh S."/>
            <person name="Kumano M."/>
            <person name="Kurita K."/>
            <person name="Lapidus A."/>
            <person name="Lardinois S."/>
            <person name="Lauber J."/>
            <person name="Lazarevic V."/>
            <person name="Lee S.-M."/>
            <person name="Levine A."/>
            <person name="Liu H."/>
            <person name="Masuda S."/>
            <person name="Mauel C."/>
            <person name="Medigue C."/>
            <person name="Medina N."/>
            <person name="Mellado R.P."/>
            <person name="Mizuno M."/>
            <person name="Moestl D."/>
            <person name="Nakai S."/>
            <person name="Noback M."/>
            <person name="Noone D."/>
            <person name="O'Reilly M."/>
            <person name="Ogawa K."/>
            <person name="Ogiwara A."/>
            <person name="Oudega B."/>
            <person name="Park S.-H."/>
            <person name="Parro V."/>
            <person name="Pohl T.M."/>
            <person name="Portetelle D."/>
            <person name="Porwollik S."/>
            <person name="Prescott A.M."/>
            <person name="Presecan E."/>
            <person name="Pujic P."/>
            <person name="Purnelle B."/>
            <person name="Rapoport G."/>
            <person name="Rey M."/>
            <person name="Reynolds S."/>
            <person name="Rieger M."/>
            <person name="Rivolta C."/>
            <person name="Rocha E."/>
            <person name="Roche B."/>
            <person name="Rose M."/>
            <person name="Sadaie Y."/>
            <person name="Sato T."/>
            <person name="Scanlan E."/>
            <person name="Schleich S."/>
            <person name="Schroeter R."/>
            <person name="Scoffone F."/>
            <person name="Sekiguchi J."/>
            <person name="Sekowska A."/>
            <person name="Seror S.J."/>
            <person name="Serror P."/>
            <person name="Shin B.-S."/>
            <person name="Soldo B."/>
            <person name="Sorokin A."/>
            <person name="Tacconi E."/>
            <person name="Takagi T."/>
            <person name="Takahashi H."/>
            <person name="Takemaru K."/>
            <person name="Takeuchi M."/>
            <person name="Tamakoshi A."/>
            <person name="Tanaka T."/>
            <person name="Terpstra P."/>
            <person name="Tognoni A."/>
            <person name="Tosato V."/>
            <person name="Uchiyama S."/>
            <person name="Vandenbol M."/>
            <person name="Vannier F."/>
            <person name="Vassarotti A."/>
            <person name="Viari A."/>
            <person name="Wambutt R."/>
            <person name="Wedler E."/>
            <person name="Wedler H."/>
            <person name="Weitzenegger T."/>
            <person name="Winters P."/>
            <person name="Wipat A."/>
            <person name="Yamamoto H."/>
            <person name="Yamane K."/>
            <person name="Yasumoto K."/>
            <person name="Yata K."/>
            <person name="Yoshida K."/>
            <person name="Yoshikawa H.-F."/>
            <person name="Zumstein E."/>
            <person name="Yoshikawa H."/>
            <person name="Danchin A."/>
        </authorList>
    </citation>
    <scope>NUCLEOTIDE SEQUENCE [LARGE SCALE GENOMIC DNA]</scope>
    <source>
        <strain>168</strain>
    </source>
</reference>
<reference key="4">
    <citation type="journal article" date="1995" name="Mol. Microbiol.">
        <title>Cleavage of trehalose-phosphate in Bacillus subtilis is catalysed by a phospho-alpha-(1-1)-glucosidase encoded by the treA gene.</title>
        <authorList>
            <person name="Helfert C."/>
            <person name="Gotsche S."/>
            <person name="Dahl M.K."/>
        </authorList>
    </citation>
    <scope>PRELIMINARY NUCLEOTIDE SEQUENCE [GENOMIC DNA] OF 1-109</scope>
    <source>
        <strain>168 / Marburg / ATCC 6051 / DSM 10 / JCM 1465 / NBRC 13719 / NCIMB 3610 / NRRL NRS-744 / VKM B-501</strain>
    </source>
</reference>
<reference key="5">
    <citation type="journal article" date="1996" name="J. Bacteriol.">
        <title>Expression of the tre operon of Bacillus subtilis 168 is regulated by the repressor TreR.</title>
        <authorList>
            <person name="Schoeck F."/>
            <person name="Dahl M.K."/>
        </authorList>
    </citation>
    <scope>FUNCTION</scope>
    <scope>DISRUPTION PHENOTYPE</scope>
    <scope>INDUCTION</scope>
    <scope>SUBSTRATE SPECIFICITY</scope>
</reference>
<reference key="6">
    <citation type="journal article" date="2007" name="Proteins">
        <title>The crystal structure of the effector-binding domain of the trehalose repressor TreR from Bacillus subtilis 168 reveals a unique quarternary assembly.</title>
        <authorList>
            <person name="Rezacova P."/>
            <person name="Krejcirikova V."/>
            <person name="Borek D."/>
            <person name="Moy S.F."/>
            <person name="Joachimiak A."/>
            <person name="Otwinowski Z."/>
        </authorList>
    </citation>
    <scope>X-RAY CRYSTALLOGRAPHY (2.50 ANGSTROMS) OF 90-238</scope>
    <scope>SUBUNIT</scope>
</reference>
<organism>
    <name type="scientific">Bacillus subtilis (strain 168)</name>
    <dbReference type="NCBI Taxonomy" id="224308"/>
    <lineage>
        <taxon>Bacteria</taxon>
        <taxon>Bacillati</taxon>
        <taxon>Bacillota</taxon>
        <taxon>Bacilli</taxon>
        <taxon>Bacillales</taxon>
        <taxon>Bacillaceae</taxon>
        <taxon>Bacillus</taxon>
    </lineage>
</organism>
<feature type="chain" id="PRO_0000050669" description="HTH-type transcriptional regulator TreR">
    <location>
        <begin position="1"/>
        <end position="238"/>
    </location>
</feature>
<feature type="domain" description="HTH gntR-type" evidence="1">
    <location>
        <begin position="1"/>
        <end position="71"/>
    </location>
</feature>
<feature type="DNA-binding region" description="H-T-H motif" evidence="1">
    <location>
        <begin position="31"/>
        <end position="50"/>
    </location>
</feature>
<feature type="strand" evidence="6">
    <location>
        <begin position="97"/>
        <end position="105"/>
    </location>
</feature>
<feature type="helix" evidence="6">
    <location>
        <begin position="109"/>
        <end position="115"/>
    </location>
</feature>
<feature type="strand" evidence="6">
    <location>
        <begin position="123"/>
        <end position="132"/>
    </location>
</feature>
<feature type="strand" evidence="6">
    <location>
        <begin position="135"/>
        <end position="145"/>
    </location>
</feature>
<feature type="turn" evidence="6">
    <location>
        <begin position="146"/>
        <end position="148"/>
    </location>
</feature>
<feature type="helix" evidence="6">
    <location>
        <begin position="154"/>
        <end position="157"/>
    </location>
</feature>
<feature type="helix" evidence="6">
    <location>
        <begin position="161"/>
        <end position="169"/>
    </location>
</feature>
<feature type="strand" evidence="6">
    <location>
        <begin position="172"/>
        <end position="184"/>
    </location>
</feature>
<feature type="helix" evidence="6">
    <location>
        <begin position="187"/>
        <end position="192"/>
    </location>
</feature>
<feature type="strand" evidence="6">
    <location>
        <begin position="200"/>
        <end position="210"/>
    </location>
</feature>
<feature type="strand" evidence="6">
    <location>
        <begin position="215"/>
        <end position="224"/>
    </location>
</feature>
<feature type="helix" evidence="6">
    <location>
        <begin position="225"/>
        <end position="227"/>
    </location>
</feature>
<protein>
    <recommendedName>
        <fullName evidence="4">HTH-type transcriptional regulator TreR</fullName>
    </recommendedName>
    <alternativeName>
        <fullName evidence="4">Trehalose operon repressor</fullName>
    </alternativeName>
</protein>
<accession>P39796</accession>
<name>TRER_BACSU</name>
<dbReference type="EMBL" id="Z54245">
    <property type="protein sequence ID" value="CAA91016.1"/>
    <property type="molecule type" value="Genomic_DNA"/>
</dbReference>
<dbReference type="EMBL" id="D83967">
    <property type="protein sequence ID" value="BAA23407.1"/>
    <property type="molecule type" value="Genomic_DNA"/>
</dbReference>
<dbReference type="EMBL" id="AL009126">
    <property type="protein sequence ID" value="CAB12611.1"/>
    <property type="molecule type" value="Genomic_DNA"/>
</dbReference>
<dbReference type="EMBL" id="X80203">
    <property type="protein sequence ID" value="CAA56496.1"/>
    <property type="status" value="ALT_FRAME"/>
    <property type="molecule type" value="Genomic_DNA"/>
</dbReference>
<dbReference type="PIR" id="JC5038">
    <property type="entry name" value="JC5038"/>
</dbReference>
<dbReference type="RefSeq" id="NP_388663.1">
    <property type="nucleotide sequence ID" value="NC_000964.3"/>
</dbReference>
<dbReference type="RefSeq" id="WP_003233679.1">
    <property type="nucleotide sequence ID" value="NZ_OZ025638.1"/>
</dbReference>
<dbReference type="PDB" id="2OGG">
    <property type="method" value="X-ray"/>
    <property type="resolution" value="2.50 A"/>
    <property type="chains" value="A=90-238"/>
</dbReference>
<dbReference type="PDBsum" id="2OGG"/>
<dbReference type="SMR" id="P39796"/>
<dbReference type="FunCoup" id="P39796">
    <property type="interactions" value="50"/>
</dbReference>
<dbReference type="STRING" id="224308.BSU07820"/>
<dbReference type="PaxDb" id="224308-BSU07820"/>
<dbReference type="DNASU" id="936133"/>
<dbReference type="EnsemblBacteria" id="CAB12611">
    <property type="protein sequence ID" value="CAB12611"/>
    <property type="gene ID" value="BSU_07820"/>
</dbReference>
<dbReference type="GeneID" id="936133"/>
<dbReference type="KEGG" id="bsu:BSU07820"/>
<dbReference type="PATRIC" id="fig|224308.179.peg.846"/>
<dbReference type="eggNOG" id="COG2188">
    <property type="taxonomic scope" value="Bacteria"/>
</dbReference>
<dbReference type="InParanoid" id="P39796"/>
<dbReference type="OrthoDB" id="9816541at2"/>
<dbReference type="PhylomeDB" id="P39796"/>
<dbReference type="BioCyc" id="BSUB:BSU07820-MONOMER"/>
<dbReference type="EvolutionaryTrace" id="P39796"/>
<dbReference type="Proteomes" id="UP000001570">
    <property type="component" value="Chromosome"/>
</dbReference>
<dbReference type="GO" id="GO:0003677">
    <property type="term" value="F:DNA binding"/>
    <property type="evidence" value="ECO:0007669"/>
    <property type="project" value="UniProtKB-KW"/>
</dbReference>
<dbReference type="GO" id="GO:0003700">
    <property type="term" value="F:DNA-binding transcription factor activity"/>
    <property type="evidence" value="ECO:0007669"/>
    <property type="project" value="InterPro"/>
</dbReference>
<dbReference type="GO" id="GO:0045892">
    <property type="term" value="P:negative regulation of DNA-templated transcription"/>
    <property type="evidence" value="ECO:0000318"/>
    <property type="project" value="GO_Central"/>
</dbReference>
<dbReference type="CDD" id="cd07377">
    <property type="entry name" value="WHTH_GntR"/>
    <property type="match status" value="1"/>
</dbReference>
<dbReference type="FunFam" id="3.40.1410.10:FF:000008">
    <property type="entry name" value="Transcriptional regulator, GntR family"/>
    <property type="match status" value="1"/>
</dbReference>
<dbReference type="Gene3D" id="3.40.1410.10">
    <property type="entry name" value="Chorismate lyase-like"/>
    <property type="match status" value="1"/>
</dbReference>
<dbReference type="Gene3D" id="1.10.10.10">
    <property type="entry name" value="Winged helix-like DNA-binding domain superfamily/Winged helix DNA-binding domain"/>
    <property type="match status" value="1"/>
</dbReference>
<dbReference type="InterPro" id="IPR050679">
    <property type="entry name" value="Bact_HTH_transcr_reg"/>
</dbReference>
<dbReference type="InterPro" id="IPR028978">
    <property type="entry name" value="Chorismate_lyase_/UTRA_dom_sf"/>
</dbReference>
<dbReference type="InterPro" id="IPR012770">
    <property type="entry name" value="TreR"/>
</dbReference>
<dbReference type="InterPro" id="IPR000524">
    <property type="entry name" value="Tscrpt_reg_HTH_GntR"/>
</dbReference>
<dbReference type="InterPro" id="IPR011663">
    <property type="entry name" value="UTRA"/>
</dbReference>
<dbReference type="InterPro" id="IPR036388">
    <property type="entry name" value="WH-like_DNA-bd_sf"/>
</dbReference>
<dbReference type="InterPro" id="IPR036390">
    <property type="entry name" value="WH_DNA-bd_sf"/>
</dbReference>
<dbReference type="NCBIfam" id="TIGR02404">
    <property type="entry name" value="trehalos_R_Bsub"/>
    <property type="match status" value="1"/>
</dbReference>
<dbReference type="PANTHER" id="PTHR44846:SF12">
    <property type="entry name" value="HTH-TYPE TRANSCRIPTIONAL REGULATOR TRER"/>
    <property type="match status" value="1"/>
</dbReference>
<dbReference type="PANTHER" id="PTHR44846">
    <property type="entry name" value="MANNOSYL-D-GLYCERATE TRANSPORT/METABOLISM SYSTEM REPRESSOR MNGR-RELATED"/>
    <property type="match status" value="1"/>
</dbReference>
<dbReference type="Pfam" id="PF00392">
    <property type="entry name" value="GntR"/>
    <property type="match status" value="1"/>
</dbReference>
<dbReference type="Pfam" id="PF07702">
    <property type="entry name" value="UTRA"/>
    <property type="match status" value="1"/>
</dbReference>
<dbReference type="PRINTS" id="PR00035">
    <property type="entry name" value="HTHGNTR"/>
</dbReference>
<dbReference type="SMART" id="SM00345">
    <property type="entry name" value="HTH_GNTR"/>
    <property type="match status" value="1"/>
</dbReference>
<dbReference type="SMART" id="SM00866">
    <property type="entry name" value="UTRA"/>
    <property type="match status" value="1"/>
</dbReference>
<dbReference type="SUPFAM" id="SSF64288">
    <property type="entry name" value="Chorismate lyase-like"/>
    <property type="match status" value="1"/>
</dbReference>
<dbReference type="SUPFAM" id="SSF46785">
    <property type="entry name" value="Winged helix' DNA-binding domain"/>
    <property type="match status" value="1"/>
</dbReference>
<dbReference type="PROSITE" id="PS50949">
    <property type="entry name" value="HTH_GNTR"/>
    <property type="match status" value="1"/>
</dbReference>
<comment type="function">
    <text evidence="3">Repressor for the trePA operon. It is able to bind trehalose-6-phosphate.</text>
</comment>
<comment type="subunit">
    <text evidence="2">Dimer of dimers.</text>
</comment>
<comment type="induction">
    <text evidence="5">Probably induced by trehalose-6-phosphate.</text>
</comment>
<comment type="disruption phenotype">
    <text evidence="3">Cells lacking this gene are constitutive in the expression of the trePA operon.</text>
</comment>
<evidence type="ECO:0000255" key="1">
    <source>
        <dbReference type="PROSITE-ProRule" id="PRU00307"/>
    </source>
</evidence>
<evidence type="ECO:0000269" key="2">
    <source>
    </source>
</evidence>
<evidence type="ECO:0000269" key="3">
    <source>
    </source>
</evidence>
<evidence type="ECO:0000303" key="4">
    <source>
    </source>
</evidence>
<evidence type="ECO:0000305" key="5">
    <source>
    </source>
</evidence>
<evidence type="ECO:0007829" key="6">
    <source>
        <dbReference type="PDB" id="2OGG"/>
    </source>
</evidence>
<proteinExistence type="evidence at protein level"/>
<gene>
    <name type="primary">treR</name>
    <name type="synonym">yfxA</name>
    <name type="ordered locus">BSU07820</name>
</gene>
<sequence>MKVNKFITIYKDIAQQIEGGRWKAEEILPSEHELTAQYGTSRETVRKALHMLAQNGYIQKIRGKGSVVLNREKMQFPVSGLVSFKELAQTLGKETKTTVHKFGLEPPSELIQKQLRANLDDDIWEVIRSRKIDGEHVILDKDYFFRKHVPHLTKEICENSIYEYIEGELGLSISYAQKEIVAEPCTDEDRELLDLRGYDHMVVVRNYVFLEDTSLFQYTESRHRLDKFRFVDFARRGK</sequence>
<keyword id="KW-0002">3D-structure</keyword>
<keyword id="KW-0238">DNA-binding</keyword>
<keyword id="KW-1185">Reference proteome</keyword>
<keyword id="KW-0678">Repressor</keyword>
<keyword id="KW-0804">Transcription</keyword>
<keyword id="KW-0805">Transcription regulation</keyword>